<evidence type="ECO:0000250" key="1">
    <source>
        <dbReference type="UniProtKB" id="Q9D6L8"/>
    </source>
</evidence>
<evidence type="ECO:0000255" key="2">
    <source>
        <dbReference type="PROSITE-ProRule" id="PRU00156"/>
    </source>
</evidence>
<evidence type="ECO:0000269" key="3">
    <source>
    </source>
</evidence>
<evidence type="ECO:0000269" key="4">
    <source>
    </source>
</evidence>
<evidence type="ECO:0000269" key="5">
    <source>
    </source>
</evidence>
<evidence type="ECO:0000303" key="6">
    <source>
    </source>
</evidence>
<evidence type="ECO:0000303" key="7">
    <source>
    </source>
</evidence>
<evidence type="ECO:0000305" key="8"/>
<evidence type="ECO:0007744" key="9">
    <source>
    </source>
</evidence>
<evidence type="ECO:0007744" key="10">
    <source>
    </source>
</evidence>
<evidence type="ECO:0007829" key="11">
    <source>
        <dbReference type="PDB" id="2OJU"/>
    </source>
</evidence>
<evidence type="ECO:0007829" key="12">
    <source>
        <dbReference type="PDB" id="2OK3"/>
    </source>
</evidence>
<protein>
    <recommendedName>
        <fullName>Peptidyl-prolyl cis-trans isomerase-like 3</fullName>
        <shortName>PPIase</shortName>
        <ecNumber>5.2.1.8</ecNumber>
    </recommendedName>
    <alternativeName>
        <fullName>Cyclophilin J</fullName>
        <shortName>CyPJ</shortName>
    </alternativeName>
    <alternativeName>
        <fullName>Cyclophilin-like protein PPIL3</fullName>
    </alternativeName>
    <alternativeName>
        <fullName>Rotamase PPIL3</fullName>
    </alternativeName>
</protein>
<accession>Q9H2H8</accession>
<accession>Q86WF9</accession>
<accession>Q96IA9</accession>
<accession>Q9BXZ1</accession>
<gene>
    <name type="primary">PPIL3</name>
</gene>
<comment type="function">
    <text>PPIases accelerate the folding of proteins. It catalyzes the cis-trans isomerization of proline imidic peptide bonds in oligopeptides. May be involved in pre-mRNA splicing.</text>
</comment>
<comment type="catalytic activity">
    <reaction>
        <text>[protein]-peptidylproline (omega=180) = [protein]-peptidylproline (omega=0)</text>
        <dbReference type="Rhea" id="RHEA:16237"/>
        <dbReference type="Rhea" id="RHEA-COMP:10747"/>
        <dbReference type="Rhea" id="RHEA-COMP:10748"/>
        <dbReference type="ChEBI" id="CHEBI:83833"/>
        <dbReference type="ChEBI" id="CHEBI:83834"/>
        <dbReference type="EC" id="5.2.1.8"/>
    </reaction>
</comment>
<comment type="subunit">
    <text evidence="4">Identified in the spliceosome C complex.</text>
</comment>
<comment type="interaction">
    <interactant intactId="EBI-751051">
        <id>Q9H2H8</id>
    </interactant>
    <interactant intactId="EBI-11028020">
        <id>Q86UT8</id>
        <label>CENATAC</label>
    </interactant>
    <organismsDiffer>false</organismsDiffer>
    <experiments>3</experiments>
</comment>
<comment type="interaction">
    <interactant intactId="EBI-751051">
        <id>Q9H2H8</id>
    </interactant>
    <interactant intactId="EBI-750559">
        <id>O95391</id>
        <label>SLU7</label>
    </interactant>
    <organismsDiffer>false</organismsDiffer>
    <experiments>7</experiments>
</comment>
<comment type="interaction">
    <interactant intactId="EBI-751051">
        <id>Q9H2H8</id>
    </interactant>
    <interactant intactId="EBI-1776808">
        <id>Q99152</id>
        <label>VP3</label>
    </interactant>
    <organismsDiffer>true</organismsDiffer>
    <experiments>3</experiments>
</comment>
<comment type="alternative products">
    <event type="alternative splicing"/>
    <isoform>
        <id>Q9H2H8-1</id>
        <name>1</name>
        <name>PPIL3b</name>
        <sequence type="displayed"/>
    </isoform>
    <isoform>
        <id>Q9H2H8-2</id>
        <name>2</name>
        <name>PPIL3a</name>
        <sequence type="described" ref="VSP_015468"/>
    </isoform>
</comment>
<comment type="tissue specificity">
    <text evidence="3">Ubiquitous. Detected at low levels.</text>
</comment>
<comment type="similarity">
    <text evidence="8">Belongs to the cyclophilin-type PPIase family. PPIL3 subfamily.</text>
</comment>
<sequence>MSVTLHTDVGDIKIEVFCERTPKTCENFLALCASNYYNGCIFHRNIKGFMVQTGDPTGTGRGGNSIWGKKFEDEYSEYLKHNVRGVVSMANNGPNTNGSQFFITYGKQPHLDMKYTVFGKVIDGLETLDELEKLPVNEKTYRPLNDVHIKDITIHANPFAQ</sequence>
<dbReference type="EC" id="5.2.1.8"/>
<dbReference type="EMBL" id="AF251049">
    <property type="protein sequence ID" value="AAK34939.1"/>
    <property type="molecule type" value="mRNA"/>
</dbReference>
<dbReference type="EMBL" id="AF271652">
    <property type="protein sequence ID" value="AAG44766.1"/>
    <property type="molecule type" value="mRNA"/>
</dbReference>
<dbReference type="EMBL" id="AF146799">
    <property type="protein sequence ID" value="AAO64723.1"/>
    <property type="molecule type" value="mRNA"/>
</dbReference>
<dbReference type="EMBL" id="AK027315">
    <property type="protein sequence ID" value="BAB55036.1"/>
    <property type="molecule type" value="mRNA"/>
</dbReference>
<dbReference type="EMBL" id="AC005037">
    <property type="protein sequence ID" value="AAY14723.1"/>
    <property type="molecule type" value="Genomic_DNA"/>
</dbReference>
<dbReference type="EMBL" id="BC007693">
    <property type="protein sequence ID" value="AAH07693.1"/>
    <property type="molecule type" value="mRNA"/>
</dbReference>
<dbReference type="CCDS" id="CCDS2332.1">
    <molecule id="Q9H2H8-2"/>
</dbReference>
<dbReference type="CCDS" id="CCDS2333.1">
    <molecule id="Q9H2H8-1"/>
</dbReference>
<dbReference type="RefSeq" id="NP_115861.1">
    <molecule id="Q9H2H8-2"/>
    <property type="nucleotide sequence ID" value="NM_032472.4"/>
</dbReference>
<dbReference type="RefSeq" id="NP_570981.1">
    <molecule id="Q9H2H8-1"/>
    <property type="nucleotide sequence ID" value="NM_130906.3"/>
</dbReference>
<dbReference type="RefSeq" id="XP_005246708.1">
    <molecule id="Q9H2H8-2"/>
    <property type="nucleotide sequence ID" value="XM_005246651.4"/>
</dbReference>
<dbReference type="RefSeq" id="XP_005246709.1">
    <molecule id="Q9H2H8-1"/>
    <property type="nucleotide sequence ID" value="XM_005246652.6"/>
</dbReference>
<dbReference type="RefSeq" id="XP_011509660.1">
    <molecule id="Q9H2H8-1"/>
    <property type="nucleotide sequence ID" value="XM_011511358.3"/>
</dbReference>
<dbReference type="RefSeq" id="XP_016859841.1">
    <molecule id="Q9H2H8-2"/>
    <property type="nucleotide sequence ID" value="XM_017004352.2"/>
</dbReference>
<dbReference type="RefSeq" id="XP_016859842.1">
    <molecule id="Q9H2H8-2"/>
    <property type="nucleotide sequence ID" value="XM_017004353.2"/>
</dbReference>
<dbReference type="RefSeq" id="XP_016859843.1">
    <molecule id="Q9H2H8-2"/>
    <property type="nucleotide sequence ID" value="XM_017004354.3"/>
</dbReference>
<dbReference type="RefSeq" id="XP_016859844.1">
    <molecule id="Q9H2H8-1"/>
    <property type="nucleotide sequence ID" value="XM_017004355.3"/>
</dbReference>
<dbReference type="RefSeq" id="XP_016859845.1">
    <molecule id="Q9H2H8-1"/>
    <property type="nucleotide sequence ID" value="XM_017004356.3"/>
</dbReference>
<dbReference type="RefSeq" id="XP_054198563.1">
    <molecule id="Q9H2H8-2"/>
    <property type="nucleotide sequence ID" value="XM_054342588.1"/>
</dbReference>
<dbReference type="RefSeq" id="XP_054198564.1">
    <molecule id="Q9H2H8-2"/>
    <property type="nucleotide sequence ID" value="XM_054342589.1"/>
</dbReference>
<dbReference type="RefSeq" id="XP_054198565.1">
    <molecule id="Q9H2H8-2"/>
    <property type="nucleotide sequence ID" value="XM_054342590.1"/>
</dbReference>
<dbReference type="RefSeq" id="XP_054198566.1">
    <molecule id="Q9H2H8-2"/>
    <property type="nucleotide sequence ID" value="XM_054342591.1"/>
</dbReference>
<dbReference type="RefSeq" id="XP_054198567.1">
    <molecule id="Q9H2H8-1"/>
    <property type="nucleotide sequence ID" value="XM_054342592.1"/>
</dbReference>
<dbReference type="RefSeq" id="XP_054198568.1">
    <molecule id="Q9H2H8-1"/>
    <property type="nucleotide sequence ID" value="XM_054342593.1"/>
</dbReference>
<dbReference type="RefSeq" id="XP_054198569.1">
    <molecule id="Q9H2H8-1"/>
    <property type="nucleotide sequence ID" value="XM_054342594.1"/>
</dbReference>
<dbReference type="RefSeq" id="XP_054198570.1">
    <molecule id="Q9H2H8-1"/>
    <property type="nucleotide sequence ID" value="XM_054342595.1"/>
</dbReference>
<dbReference type="PDB" id="1XYH">
    <property type="method" value="X-ray"/>
    <property type="resolution" value="2.60 A"/>
    <property type="chains" value="A=1-161"/>
</dbReference>
<dbReference type="PDB" id="2OJU">
    <property type="method" value="X-ray"/>
    <property type="resolution" value="2.40 A"/>
    <property type="chains" value="A/B=1-161"/>
</dbReference>
<dbReference type="PDB" id="2OK3">
    <property type="method" value="X-ray"/>
    <property type="resolution" value="2.00 A"/>
    <property type="chains" value="A=1-161"/>
</dbReference>
<dbReference type="PDB" id="8C6J">
    <property type="method" value="EM"/>
    <property type="resolution" value="2.80 A"/>
    <property type="chains" value="C3=1-161"/>
</dbReference>
<dbReference type="PDBsum" id="1XYH"/>
<dbReference type="PDBsum" id="2OJU"/>
<dbReference type="PDBsum" id="2OK3"/>
<dbReference type="PDBsum" id="8C6J"/>
<dbReference type="EMDB" id="EMD-16452"/>
<dbReference type="SMR" id="Q9H2H8"/>
<dbReference type="BioGRID" id="119820">
    <property type="interactions" value="87"/>
</dbReference>
<dbReference type="CORUM" id="Q9H2H8"/>
<dbReference type="FunCoup" id="Q9H2H8">
    <property type="interactions" value="2525"/>
</dbReference>
<dbReference type="IntAct" id="Q9H2H8">
    <property type="interactions" value="31"/>
</dbReference>
<dbReference type="MINT" id="Q9H2H8"/>
<dbReference type="STRING" id="9606.ENSP00000286175"/>
<dbReference type="GlyGen" id="Q9H2H8">
    <property type="glycosylation" value="1 site, 1 O-linked glycan (1 site)"/>
</dbReference>
<dbReference type="iPTMnet" id="Q9H2H8"/>
<dbReference type="MetOSite" id="Q9H2H8"/>
<dbReference type="PhosphoSitePlus" id="Q9H2H8"/>
<dbReference type="BioMuta" id="PPIL3"/>
<dbReference type="DMDM" id="73921766"/>
<dbReference type="jPOST" id="Q9H2H8"/>
<dbReference type="MassIVE" id="Q9H2H8"/>
<dbReference type="PeptideAtlas" id="Q9H2H8"/>
<dbReference type="ProteomicsDB" id="80550">
    <molecule id="Q9H2H8-1"/>
</dbReference>
<dbReference type="ProteomicsDB" id="80551">
    <molecule id="Q9H2H8-2"/>
</dbReference>
<dbReference type="Pumba" id="Q9H2H8"/>
<dbReference type="TopDownProteomics" id="Q9H2H8-1">
    <molecule id="Q9H2H8-1"/>
</dbReference>
<dbReference type="Antibodypedia" id="34922">
    <property type="antibodies" value="231 antibodies from 23 providers"/>
</dbReference>
<dbReference type="DNASU" id="53938"/>
<dbReference type="Ensembl" id="ENST00000286175.12">
    <molecule id="Q9H2H8-2"/>
    <property type="protein sequence ID" value="ENSP00000286175.8"/>
    <property type="gene ID" value="ENSG00000240344.10"/>
</dbReference>
<dbReference type="Ensembl" id="ENST00000392283.9">
    <molecule id="Q9H2H8-1"/>
    <property type="protein sequence ID" value="ENSP00000376107.4"/>
    <property type="gene ID" value="ENSG00000240344.10"/>
</dbReference>
<dbReference type="Ensembl" id="ENST00000409449.5">
    <molecule id="Q9H2H8-2"/>
    <property type="protein sequence ID" value="ENSP00000387012.1"/>
    <property type="gene ID" value="ENSG00000240344.10"/>
</dbReference>
<dbReference type="GeneID" id="53938"/>
<dbReference type="KEGG" id="hsa:53938"/>
<dbReference type="MANE-Select" id="ENST00000392283.9">
    <property type="protein sequence ID" value="ENSP00000376107.4"/>
    <property type="RefSeq nucleotide sequence ID" value="NM_130906.3"/>
    <property type="RefSeq protein sequence ID" value="NP_570981.1"/>
</dbReference>
<dbReference type="UCSC" id="uc002uwh.4">
    <molecule id="Q9H2H8-1"/>
    <property type="organism name" value="human"/>
</dbReference>
<dbReference type="AGR" id="HGNC:9262"/>
<dbReference type="CTD" id="53938"/>
<dbReference type="DisGeNET" id="53938"/>
<dbReference type="GeneCards" id="PPIL3"/>
<dbReference type="HGNC" id="HGNC:9262">
    <property type="gene designation" value="PPIL3"/>
</dbReference>
<dbReference type="HPA" id="ENSG00000240344">
    <property type="expression patterns" value="Low tissue specificity"/>
</dbReference>
<dbReference type="MIM" id="615811">
    <property type="type" value="gene"/>
</dbReference>
<dbReference type="neXtProt" id="NX_Q9H2H8"/>
<dbReference type="OpenTargets" id="ENSG00000240344"/>
<dbReference type="PharmGKB" id="PA33589"/>
<dbReference type="VEuPathDB" id="HostDB:ENSG00000240344"/>
<dbReference type="GeneTree" id="ENSGT00940000153189"/>
<dbReference type="HOGENOM" id="CLU_012062_16_3_1"/>
<dbReference type="InParanoid" id="Q9H2H8"/>
<dbReference type="OMA" id="VPFHRVM"/>
<dbReference type="OrthoDB" id="271386at2759"/>
<dbReference type="PAN-GO" id="Q9H2H8">
    <property type="GO annotations" value="3 GO annotations based on evolutionary models"/>
</dbReference>
<dbReference type="PhylomeDB" id="Q9H2H8"/>
<dbReference type="TreeFam" id="TF352224"/>
<dbReference type="BRENDA" id="5.2.1.8">
    <property type="organism ID" value="2681"/>
</dbReference>
<dbReference type="PathwayCommons" id="Q9H2H8"/>
<dbReference type="Reactome" id="R-HSA-72163">
    <property type="pathway name" value="mRNA Splicing - Major Pathway"/>
</dbReference>
<dbReference type="SignaLink" id="Q9H2H8"/>
<dbReference type="BioGRID-ORCS" id="53938">
    <property type="hits" value="13 hits in 1162 CRISPR screens"/>
</dbReference>
<dbReference type="ChiTaRS" id="PPIL3">
    <property type="organism name" value="human"/>
</dbReference>
<dbReference type="EvolutionaryTrace" id="Q9H2H8"/>
<dbReference type="GeneWiki" id="PPIL3"/>
<dbReference type="GenomeRNAi" id="53938"/>
<dbReference type="Pharos" id="Q9H2H8">
    <property type="development level" value="Tbio"/>
</dbReference>
<dbReference type="PRO" id="PR:Q9H2H8"/>
<dbReference type="Proteomes" id="UP000005640">
    <property type="component" value="Chromosome 2"/>
</dbReference>
<dbReference type="RNAct" id="Q9H2H8">
    <property type="molecule type" value="protein"/>
</dbReference>
<dbReference type="Bgee" id="ENSG00000240344">
    <property type="expression patterns" value="Expressed in ileal mucosa and 180 other cell types or tissues"/>
</dbReference>
<dbReference type="ExpressionAtlas" id="Q9H2H8">
    <property type="expression patterns" value="baseline and differential"/>
</dbReference>
<dbReference type="GO" id="GO:0071013">
    <property type="term" value="C:catalytic step 2 spliceosome"/>
    <property type="evidence" value="ECO:0000314"/>
    <property type="project" value="UniProtKB"/>
</dbReference>
<dbReference type="GO" id="GO:0005654">
    <property type="term" value="C:nucleoplasm"/>
    <property type="evidence" value="ECO:0000304"/>
    <property type="project" value="Reactome"/>
</dbReference>
<dbReference type="GO" id="GO:0003755">
    <property type="term" value="F:peptidyl-prolyl cis-trans isomerase activity"/>
    <property type="evidence" value="ECO:0000318"/>
    <property type="project" value="GO_Central"/>
</dbReference>
<dbReference type="GO" id="GO:0000398">
    <property type="term" value="P:mRNA splicing, via spliceosome"/>
    <property type="evidence" value="ECO:0000305"/>
    <property type="project" value="UniProtKB"/>
</dbReference>
<dbReference type="GO" id="GO:0006457">
    <property type="term" value="P:protein folding"/>
    <property type="evidence" value="ECO:0000318"/>
    <property type="project" value="GO_Central"/>
</dbReference>
<dbReference type="CDD" id="cd01928">
    <property type="entry name" value="Cyclophilin_PPIL3_like"/>
    <property type="match status" value="1"/>
</dbReference>
<dbReference type="FunFam" id="2.40.100.10:FF:000012">
    <property type="entry name" value="Peptidyl-prolyl cis-trans isomerase"/>
    <property type="match status" value="1"/>
</dbReference>
<dbReference type="Gene3D" id="2.40.100.10">
    <property type="entry name" value="Cyclophilin-like"/>
    <property type="match status" value="1"/>
</dbReference>
<dbReference type="InterPro" id="IPR029000">
    <property type="entry name" value="Cyclophilin-like_dom_sf"/>
</dbReference>
<dbReference type="InterPro" id="IPR024936">
    <property type="entry name" value="Cyclophilin-type_PPIase"/>
</dbReference>
<dbReference type="InterPro" id="IPR020892">
    <property type="entry name" value="Cyclophilin-type_PPIase_CS"/>
</dbReference>
<dbReference type="InterPro" id="IPR002130">
    <property type="entry name" value="Cyclophilin-type_PPIase_dom"/>
</dbReference>
<dbReference type="InterPro" id="IPR044666">
    <property type="entry name" value="Cyclophilin_A-like"/>
</dbReference>
<dbReference type="PANTHER" id="PTHR45625:SF2">
    <property type="entry name" value="PEPTIDYL-PROLYL CIS-TRANS ISOMERASE-LIKE 3"/>
    <property type="match status" value="1"/>
</dbReference>
<dbReference type="PANTHER" id="PTHR45625">
    <property type="entry name" value="PEPTIDYL-PROLYL CIS-TRANS ISOMERASE-RELATED"/>
    <property type="match status" value="1"/>
</dbReference>
<dbReference type="Pfam" id="PF00160">
    <property type="entry name" value="Pro_isomerase"/>
    <property type="match status" value="1"/>
</dbReference>
<dbReference type="PIRSF" id="PIRSF001467">
    <property type="entry name" value="Peptidylpro_ismrse"/>
    <property type="match status" value="1"/>
</dbReference>
<dbReference type="PRINTS" id="PR00153">
    <property type="entry name" value="CSAPPISMRASE"/>
</dbReference>
<dbReference type="SUPFAM" id="SSF50891">
    <property type="entry name" value="Cyclophilin-like"/>
    <property type="match status" value="1"/>
</dbReference>
<dbReference type="PROSITE" id="PS00170">
    <property type="entry name" value="CSA_PPIASE_1"/>
    <property type="match status" value="1"/>
</dbReference>
<dbReference type="PROSITE" id="PS50072">
    <property type="entry name" value="CSA_PPIASE_2"/>
    <property type="match status" value="1"/>
</dbReference>
<name>PPIL3_HUMAN</name>
<reference key="1">
    <citation type="journal article" date="2001" name="Cytogenet. Cell Genet.">
        <title>Molecular cloning and characterization of a novel peptidylprolyl isomerase (cyclophilin)-like gene (PPIL3) from human fetal brain.</title>
        <authorList>
            <person name="Zhou Z."/>
            <person name="Ying K."/>
            <person name="Dai J."/>
            <person name="Tang R."/>
            <person name="Wang W."/>
            <person name="Huang Y."/>
            <person name="Zhao W."/>
            <person name="Xie Y."/>
            <person name="Mao Y."/>
        </authorList>
    </citation>
    <scope>NUCLEOTIDE SEQUENCE [MRNA] (ISOFORMS 1 AND 2)</scope>
    <scope>TISSUE SPECIFICITY</scope>
    <source>
        <tissue>Fetal brain</tissue>
    </source>
</reference>
<reference key="2">
    <citation type="submission" date="1999-04" db="EMBL/GenBank/DDBJ databases">
        <authorList>
            <person name="Ding J.B."/>
            <person name="Yu L."/>
            <person name="Zhao S.Y."/>
        </authorList>
    </citation>
    <scope>NUCLEOTIDE SEQUENCE [MRNA] (ISOFORM 1)</scope>
</reference>
<reference key="3">
    <citation type="journal article" date="2004" name="Nat. Genet.">
        <title>Complete sequencing and characterization of 21,243 full-length human cDNAs.</title>
        <authorList>
            <person name="Ota T."/>
            <person name="Suzuki Y."/>
            <person name="Nishikawa T."/>
            <person name="Otsuki T."/>
            <person name="Sugiyama T."/>
            <person name="Irie R."/>
            <person name="Wakamatsu A."/>
            <person name="Hayashi K."/>
            <person name="Sato H."/>
            <person name="Nagai K."/>
            <person name="Kimura K."/>
            <person name="Makita H."/>
            <person name="Sekine M."/>
            <person name="Obayashi M."/>
            <person name="Nishi T."/>
            <person name="Shibahara T."/>
            <person name="Tanaka T."/>
            <person name="Ishii S."/>
            <person name="Yamamoto J."/>
            <person name="Saito K."/>
            <person name="Kawai Y."/>
            <person name="Isono Y."/>
            <person name="Nakamura Y."/>
            <person name="Nagahari K."/>
            <person name="Murakami K."/>
            <person name="Yasuda T."/>
            <person name="Iwayanagi T."/>
            <person name="Wagatsuma M."/>
            <person name="Shiratori A."/>
            <person name="Sudo H."/>
            <person name="Hosoiri T."/>
            <person name="Kaku Y."/>
            <person name="Kodaira H."/>
            <person name="Kondo H."/>
            <person name="Sugawara M."/>
            <person name="Takahashi M."/>
            <person name="Kanda K."/>
            <person name="Yokoi T."/>
            <person name="Furuya T."/>
            <person name="Kikkawa E."/>
            <person name="Omura Y."/>
            <person name="Abe K."/>
            <person name="Kamihara K."/>
            <person name="Katsuta N."/>
            <person name="Sato K."/>
            <person name="Tanikawa M."/>
            <person name="Yamazaki M."/>
            <person name="Ninomiya K."/>
            <person name="Ishibashi T."/>
            <person name="Yamashita H."/>
            <person name="Murakawa K."/>
            <person name="Fujimori K."/>
            <person name="Tanai H."/>
            <person name="Kimata M."/>
            <person name="Watanabe M."/>
            <person name="Hiraoka S."/>
            <person name="Chiba Y."/>
            <person name="Ishida S."/>
            <person name="Ono Y."/>
            <person name="Takiguchi S."/>
            <person name="Watanabe S."/>
            <person name="Yosida M."/>
            <person name="Hotuta T."/>
            <person name="Kusano J."/>
            <person name="Kanehori K."/>
            <person name="Takahashi-Fujii A."/>
            <person name="Hara H."/>
            <person name="Tanase T.-O."/>
            <person name="Nomura Y."/>
            <person name="Togiya S."/>
            <person name="Komai F."/>
            <person name="Hara R."/>
            <person name="Takeuchi K."/>
            <person name="Arita M."/>
            <person name="Imose N."/>
            <person name="Musashino K."/>
            <person name="Yuuki H."/>
            <person name="Oshima A."/>
            <person name="Sasaki N."/>
            <person name="Aotsuka S."/>
            <person name="Yoshikawa Y."/>
            <person name="Matsunawa H."/>
            <person name="Ichihara T."/>
            <person name="Shiohata N."/>
            <person name="Sano S."/>
            <person name="Moriya S."/>
            <person name="Momiyama H."/>
            <person name="Satoh N."/>
            <person name="Takami S."/>
            <person name="Terashima Y."/>
            <person name="Suzuki O."/>
            <person name="Nakagawa S."/>
            <person name="Senoh A."/>
            <person name="Mizoguchi H."/>
            <person name="Goto Y."/>
            <person name="Shimizu F."/>
            <person name="Wakebe H."/>
            <person name="Hishigaki H."/>
            <person name="Watanabe T."/>
            <person name="Sugiyama A."/>
            <person name="Takemoto M."/>
            <person name="Kawakami B."/>
            <person name="Yamazaki M."/>
            <person name="Watanabe K."/>
            <person name="Kumagai A."/>
            <person name="Itakura S."/>
            <person name="Fukuzumi Y."/>
            <person name="Fujimori Y."/>
            <person name="Komiyama M."/>
            <person name="Tashiro H."/>
            <person name="Tanigami A."/>
            <person name="Fujiwara T."/>
            <person name="Ono T."/>
            <person name="Yamada K."/>
            <person name="Fujii Y."/>
            <person name="Ozaki K."/>
            <person name="Hirao M."/>
            <person name="Ohmori Y."/>
            <person name="Kawabata A."/>
            <person name="Hikiji T."/>
            <person name="Kobatake N."/>
            <person name="Inagaki H."/>
            <person name="Ikema Y."/>
            <person name="Okamoto S."/>
            <person name="Okitani R."/>
            <person name="Kawakami T."/>
            <person name="Noguchi S."/>
            <person name="Itoh T."/>
            <person name="Shigeta K."/>
            <person name="Senba T."/>
            <person name="Matsumura K."/>
            <person name="Nakajima Y."/>
            <person name="Mizuno T."/>
            <person name="Morinaga M."/>
            <person name="Sasaki M."/>
            <person name="Togashi T."/>
            <person name="Oyama M."/>
            <person name="Hata H."/>
            <person name="Watanabe M."/>
            <person name="Komatsu T."/>
            <person name="Mizushima-Sugano J."/>
            <person name="Satoh T."/>
            <person name="Shirai Y."/>
            <person name="Takahashi Y."/>
            <person name="Nakagawa K."/>
            <person name="Okumura K."/>
            <person name="Nagase T."/>
            <person name="Nomura N."/>
            <person name="Kikuchi H."/>
            <person name="Masuho Y."/>
            <person name="Yamashita R."/>
            <person name="Nakai K."/>
            <person name="Yada T."/>
            <person name="Nakamura Y."/>
            <person name="Ohara O."/>
            <person name="Isogai T."/>
            <person name="Sugano S."/>
        </authorList>
    </citation>
    <scope>NUCLEOTIDE SEQUENCE [LARGE SCALE MRNA] (ISOFORM 2)</scope>
    <source>
        <tissue>Embryo</tissue>
    </source>
</reference>
<reference key="4">
    <citation type="journal article" date="2005" name="Nature">
        <title>Generation and annotation of the DNA sequences of human chromosomes 2 and 4.</title>
        <authorList>
            <person name="Hillier L.W."/>
            <person name="Graves T.A."/>
            <person name="Fulton R.S."/>
            <person name="Fulton L.A."/>
            <person name="Pepin K.H."/>
            <person name="Minx P."/>
            <person name="Wagner-McPherson C."/>
            <person name="Layman D."/>
            <person name="Wylie K."/>
            <person name="Sekhon M."/>
            <person name="Becker M.C."/>
            <person name="Fewell G.A."/>
            <person name="Delehaunty K.D."/>
            <person name="Miner T.L."/>
            <person name="Nash W.E."/>
            <person name="Kremitzki C."/>
            <person name="Oddy L."/>
            <person name="Du H."/>
            <person name="Sun H."/>
            <person name="Bradshaw-Cordum H."/>
            <person name="Ali J."/>
            <person name="Carter J."/>
            <person name="Cordes M."/>
            <person name="Harris A."/>
            <person name="Isak A."/>
            <person name="van Brunt A."/>
            <person name="Nguyen C."/>
            <person name="Du F."/>
            <person name="Courtney L."/>
            <person name="Kalicki J."/>
            <person name="Ozersky P."/>
            <person name="Abbott S."/>
            <person name="Armstrong J."/>
            <person name="Belter E.A."/>
            <person name="Caruso L."/>
            <person name="Cedroni M."/>
            <person name="Cotton M."/>
            <person name="Davidson T."/>
            <person name="Desai A."/>
            <person name="Elliott G."/>
            <person name="Erb T."/>
            <person name="Fronick C."/>
            <person name="Gaige T."/>
            <person name="Haakenson W."/>
            <person name="Haglund K."/>
            <person name="Holmes A."/>
            <person name="Harkins R."/>
            <person name="Kim K."/>
            <person name="Kruchowski S.S."/>
            <person name="Strong C.M."/>
            <person name="Grewal N."/>
            <person name="Goyea E."/>
            <person name="Hou S."/>
            <person name="Levy A."/>
            <person name="Martinka S."/>
            <person name="Mead K."/>
            <person name="McLellan M.D."/>
            <person name="Meyer R."/>
            <person name="Randall-Maher J."/>
            <person name="Tomlinson C."/>
            <person name="Dauphin-Kohlberg S."/>
            <person name="Kozlowicz-Reilly A."/>
            <person name="Shah N."/>
            <person name="Swearengen-Shahid S."/>
            <person name="Snider J."/>
            <person name="Strong J.T."/>
            <person name="Thompson J."/>
            <person name="Yoakum M."/>
            <person name="Leonard S."/>
            <person name="Pearman C."/>
            <person name="Trani L."/>
            <person name="Radionenko M."/>
            <person name="Waligorski J.E."/>
            <person name="Wang C."/>
            <person name="Rock S.M."/>
            <person name="Tin-Wollam A.-M."/>
            <person name="Maupin R."/>
            <person name="Latreille P."/>
            <person name="Wendl M.C."/>
            <person name="Yang S.-P."/>
            <person name="Pohl C."/>
            <person name="Wallis J.W."/>
            <person name="Spieth J."/>
            <person name="Bieri T.A."/>
            <person name="Berkowicz N."/>
            <person name="Nelson J.O."/>
            <person name="Osborne J."/>
            <person name="Ding L."/>
            <person name="Meyer R."/>
            <person name="Sabo A."/>
            <person name="Shotland Y."/>
            <person name="Sinha P."/>
            <person name="Wohldmann P.E."/>
            <person name="Cook L.L."/>
            <person name="Hickenbotham M.T."/>
            <person name="Eldred J."/>
            <person name="Williams D."/>
            <person name="Jones T.A."/>
            <person name="She X."/>
            <person name="Ciccarelli F.D."/>
            <person name="Izaurralde E."/>
            <person name="Taylor J."/>
            <person name="Schmutz J."/>
            <person name="Myers R.M."/>
            <person name="Cox D.R."/>
            <person name="Huang X."/>
            <person name="McPherson J.D."/>
            <person name="Mardis E.R."/>
            <person name="Clifton S.W."/>
            <person name="Warren W.C."/>
            <person name="Chinwalla A.T."/>
            <person name="Eddy S.R."/>
            <person name="Marra M.A."/>
            <person name="Ovcharenko I."/>
            <person name="Furey T.S."/>
            <person name="Miller W."/>
            <person name="Eichler E.E."/>
            <person name="Bork P."/>
            <person name="Suyama M."/>
            <person name="Torrents D."/>
            <person name="Waterston R.H."/>
            <person name="Wilson R.K."/>
        </authorList>
    </citation>
    <scope>NUCLEOTIDE SEQUENCE [LARGE SCALE GENOMIC DNA]</scope>
</reference>
<reference key="5">
    <citation type="journal article" date="2004" name="Genome Res.">
        <title>The status, quality, and expansion of the NIH full-length cDNA project: the Mammalian Gene Collection (MGC).</title>
        <authorList>
            <consortium name="The MGC Project Team"/>
        </authorList>
    </citation>
    <scope>NUCLEOTIDE SEQUENCE [LARGE SCALE MRNA] (ISOFORM 1)</scope>
    <scope>VARIANT GLU-146</scope>
    <source>
        <tissue>Placenta</tissue>
    </source>
</reference>
<reference key="6">
    <citation type="journal article" date="2002" name="RNA">
        <title>Purification and characterization of native spliceosomes suitable for three-dimensional structural analysis.</title>
        <authorList>
            <person name="Jurica M.S."/>
            <person name="Licklider L.J."/>
            <person name="Gygi S.P."/>
            <person name="Grigorieff N."/>
            <person name="Moore M.J."/>
        </authorList>
    </citation>
    <scope>IDENTIFICATION BY MASS SPECTROMETRY</scope>
    <scope>IDENTIFICATION IN THE SPLICEOSOMAL C COMPLEX</scope>
</reference>
<reference key="7">
    <citation type="journal article" date="2009" name="Anal. Chem.">
        <title>Lys-N and trypsin cover complementary parts of the phosphoproteome in a refined SCX-based approach.</title>
        <authorList>
            <person name="Gauci S."/>
            <person name="Helbig A.O."/>
            <person name="Slijper M."/>
            <person name="Krijgsveld J."/>
            <person name="Heck A.J."/>
            <person name="Mohammed S."/>
        </authorList>
    </citation>
    <scope>ACETYLATION [LARGE SCALE ANALYSIS] AT SER-2</scope>
    <scope>CLEAVAGE OF INITIATOR METHIONINE [LARGE SCALE ANALYSIS]</scope>
    <scope>IDENTIFICATION BY MASS SPECTROMETRY [LARGE SCALE ANALYSIS]</scope>
</reference>
<reference key="8">
    <citation type="journal article" date="2011" name="BMC Syst. Biol.">
        <title>Initial characterization of the human central proteome.</title>
        <authorList>
            <person name="Burkard T.R."/>
            <person name="Planyavsky M."/>
            <person name="Kaupe I."/>
            <person name="Breitwieser F.P."/>
            <person name="Buerckstuemmer T."/>
            <person name="Bennett K.L."/>
            <person name="Superti-Furga G."/>
            <person name="Colinge J."/>
        </authorList>
    </citation>
    <scope>IDENTIFICATION BY MASS SPECTROMETRY [LARGE SCALE ANALYSIS]</scope>
</reference>
<reference key="9">
    <citation type="journal article" date="2012" name="Mol. Cell. Proteomics">
        <title>Comparative large-scale characterisation of plant vs. mammal proteins reveals similar and idiosyncratic N-alpha acetylation features.</title>
        <authorList>
            <person name="Bienvenut W.V."/>
            <person name="Sumpton D."/>
            <person name="Martinez A."/>
            <person name="Lilla S."/>
            <person name="Espagne C."/>
            <person name="Meinnel T."/>
            <person name="Giglione C."/>
        </authorList>
    </citation>
    <scope>ACETYLATION [LARGE SCALE ANALYSIS] AT SER-2</scope>
    <scope>CLEAVAGE OF INITIATOR METHIONINE [LARGE SCALE ANALYSIS]</scope>
    <scope>IDENTIFICATION BY MASS SPECTROMETRY [LARGE SCALE ANALYSIS]</scope>
</reference>
<reference key="10">
    <citation type="journal article" date="2014" name="J. Proteomics">
        <title>An enzyme assisted RP-RPLC approach for in-depth analysis of human liver phosphoproteome.</title>
        <authorList>
            <person name="Bian Y."/>
            <person name="Song C."/>
            <person name="Cheng K."/>
            <person name="Dong M."/>
            <person name="Wang F."/>
            <person name="Huang J."/>
            <person name="Sun D."/>
            <person name="Wang L."/>
            <person name="Ye M."/>
            <person name="Zou H."/>
        </authorList>
    </citation>
    <scope>IDENTIFICATION BY MASS SPECTROMETRY [LARGE SCALE ANALYSIS]</scope>
    <source>
        <tissue>Liver</tissue>
    </source>
</reference>
<reference key="11">
    <citation type="journal article" date="2005" name="Acta Crystallogr. D">
        <title>Structure of recombinant human cyclophilin J, a novel member of the cyclophilin family.</title>
        <authorList>
            <person name="Huang L.-L."/>
            <person name="Zhao X.-M."/>
            <person name="Huang C.-Q."/>
            <person name="Yu L."/>
            <person name="Xia Z.-X."/>
        </authorList>
    </citation>
    <scope>X-RAY CRYSTALLOGRAPHY (2.6 ANGSTROMS)</scope>
</reference>
<proteinExistence type="evidence at protein level"/>
<feature type="initiator methionine" description="Removed" evidence="9 10">
    <location>
        <position position="1"/>
    </location>
</feature>
<feature type="chain" id="PRO_0000064166" description="Peptidyl-prolyl cis-trans isomerase-like 3">
    <location>
        <begin position="2"/>
        <end position="161"/>
    </location>
</feature>
<feature type="domain" description="PPIase cyclophilin-type" evidence="2">
    <location>
        <begin position="2"/>
        <end position="154"/>
    </location>
</feature>
<feature type="modified residue" description="N-acetylserine" evidence="9 10">
    <location>
        <position position="2"/>
    </location>
</feature>
<feature type="modified residue" description="Omega-N-methylarginine" evidence="1">
    <location>
        <position position="61"/>
    </location>
</feature>
<feature type="splice variant" id="VSP_015468" description="In isoform 2." evidence="6 7">
    <original>NFLALCASNYYNGCIFHRNIKGFMVQTGDPTG</original>
    <variation>MESRCVPQAGVQWRDLGSLQPPPPGFKQVFCLSLPR</variation>
    <location>
        <begin position="27"/>
        <end position="58"/>
    </location>
</feature>
<feature type="sequence variant" id="VAR_023417" description="In dbSNP:rs7562391." evidence="5">
    <original>D</original>
    <variation>E</variation>
    <location>
        <position position="146"/>
    </location>
</feature>
<feature type="sequence conflict" description="In Ref. 2; AAO64723." evidence="8" ref="2">
    <original>RG</original>
    <variation>KR</variation>
    <location>
        <begin position="61"/>
        <end position="62"/>
    </location>
</feature>
<feature type="sequence conflict" description="In Ref. 2; AAO64723." evidence="8" ref="2">
    <original>S</original>
    <variation>V</variation>
    <location>
        <position position="65"/>
    </location>
</feature>
<feature type="sequence conflict" description="In Ref. 2; AAO64723." evidence="8" ref="2">
    <original>Y</original>
    <variation>I</variation>
    <location>
        <position position="78"/>
    </location>
</feature>
<feature type="strand" evidence="12">
    <location>
        <begin position="2"/>
        <end position="7"/>
    </location>
</feature>
<feature type="strand" evidence="12">
    <location>
        <begin position="10"/>
        <end position="16"/>
    </location>
</feature>
<feature type="turn" evidence="12">
    <location>
        <begin position="18"/>
        <end position="20"/>
    </location>
</feature>
<feature type="helix" evidence="12">
    <location>
        <begin position="22"/>
        <end position="33"/>
    </location>
</feature>
<feature type="turn" evidence="12">
    <location>
        <begin position="34"/>
        <end position="39"/>
    </location>
</feature>
<feature type="strand" evidence="12">
    <location>
        <begin position="44"/>
        <end position="46"/>
    </location>
</feature>
<feature type="turn" evidence="12">
    <location>
        <begin position="47"/>
        <end position="49"/>
    </location>
</feature>
<feature type="strand" evidence="12">
    <location>
        <begin position="50"/>
        <end position="53"/>
    </location>
</feature>
<feature type="strand" evidence="12">
    <location>
        <begin position="58"/>
        <end position="61"/>
    </location>
</feature>
<feature type="strand" evidence="12">
    <location>
        <begin position="86"/>
        <end position="89"/>
    </location>
</feature>
<feature type="strand" evidence="11">
    <location>
        <begin position="92"/>
        <end position="95"/>
    </location>
</feature>
<feature type="strand" evidence="12">
    <location>
        <begin position="101"/>
        <end position="106"/>
    </location>
</feature>
<feature type="helix" evidence="12">
    <location>
        <begin position="109"/>
        <end position="111"/>
    </location>
</feature>
<feature type="turn" evidence="12">
    <location>
        <begin position="112"/>
        <end position="114"/>
    </location>
</feature>
<feature type="strand" evidence="12">
    <location>
        <begin position="117"/>
        <end position="123"/>
    </location>
</feature>
<feature type="helix" evidence="12">
    <location>
        <begin position="125"/>
        <end position="132"/>
    </location>
</feature>
<feature type="turn" evidence="12">
    <location>
        <begin position="138"/>
        <end position="140"/>
    </location>
</feature>
<feature type="strand" evidence="12">
    <location>
        <begin position="143"/>
        <end position="145"/>
    </location>
</feature>
<feature type="strand" evidence="12">
    <location>
        <begin position="148"/>
        <end position="155"/>
    </location>
</feature>
<organism>
    <name type="scientific">Homo sapiens</name>
    <name type="common">Human</name>
    <dbReference type="NCBI Taxonomy" id="9606"/>
    <lineage>
        <taxon>Eukaryota</taxon>
        <taxon>Metazoa</taxon>
        <taxon>Chordata</taxon>
        <taxon>Craniata</taxon>
        <taxon>Vertebrata</taxon>
        <taxon>Euteleostomi</taxon>
        <taxon>Mammalia</taxon>
        <taxon>Eutheria</taxon>
        <taxon>Euarchontoglires</taxon>
        <taxon>Primates</taxon>
        <taxon>Haplorrhini</taxon>
        <taxon>Catarrhini</taxon>
        <taxon>Hominidae</taxon>
        <taxon>Homo</taxon>
    </lineage>
</organism>
<keyword id="KW-0002">3D-structure</keyword>
<keyword id="KW-0007">Acetylation</keyword>
<keyword id="KW-0025">Alternative splicing</keyword>
<keyword id="KW-0413">Isomerase</keyword>
<keyword id="KW-0488">Methylation</keyword>
<keyword id="KW-0507">mRNA processing</keyword>
<keyword id="KW-0508">mRNA splicing</keyword>
<keyword id="KW-1267">Proteomics identification</keyword>
<keyword id="KW-1185">Reference proteome</keyword>
<keyword id="KW-0697">Rotamase</keyword>
<keyword id="KW-0747">Spliceosome</keyword>